<protein>
    <recommendedName>
        <fullName evidence="1">N-acetylmannosamine kinase</fullName>
        <ecNumber evidence="1">2.7.1.60</ecNumber>
    </recommendedName>
    <alternativeName>
        <fullName evidence="1">ManNAc kinase</fullName>
    </alternativeName>
    <alternativeName>
        <fullName evidence="1">N-acetyl-D-mannosamine kinase</fullName>
    </alternativeName>
</protein>
<comment type="function">
    <text evidence="1">Catalyzes the phosphorylation of N-acetylmannosamine (ManNAc) to ManNAc-6-P.</text>
</comment>
<comment type="catalytic activity">
    <reaction evidence="1">
        <text>an N-acyl-D-mannosamine + ATP = an N-acyl-D-mannosamine 6-phosphate + ADP + H(+)</text>
        <dbReference type="Rhea" id="RHEA:23832"/>
        <dbReference type="ChEBI" id="CHEBI:15378"/>
        <dbReference type="ChEBI" id="CHEBI:16062"/>
        <dbReference type="ChEBI" id="CHEBI:30616"/>
        <dbReference type="ChEBI" id="CHEBI:57666"/>
        <dbReference type="ChEBI" id="CHEBI:456216"/>
        <dbReference type="EC" id="2.7.1.60"/>
    </reaction>
</comment>
<comment type="pathway">
    <text evidence="1">Amino-sugar metabolism; N-acetylneuraminate degradation; D-fructose 6-phosphate from N-acetylneuraminate: step 2/5.</text>
</comment>
<comment type="subunit">
    <text evidence="1">Homodimer.</text>
</comment>
<comment type="similarity">
    <text evidence="1">Belongs to the ROK (NagC/XylR) family. NanK subfamily.</text>
</comment>
<dbReference type="EC" id="2.7.1.60" evidence="1"/>
<dbReference type="EMBL" id="CP000468">
    <property type="protein sequence ID" value="ABJ02706.1"/>
    <property type="molecule type" value="Genomic_DNA"/>
</dbReference>
<dbReference type="RefSeq" id="WP_000209056.1">
    <property type="nucleotide sequence ID" value="NZ_CADILS010000003.1"/>
</dbReference>
<dbReference type="SMR" id="A1AGB6"/>
<dbReference type="KEGG" id="ecv:APECO1_3221"/>
<dbReference type="HOGENOM" id="CLU_036604_0_4_6"/>
<dbReference type="UniPathway" id="UPA00629">
    <property type="reaction ID" value="UER00681"/>
</dbReference>
<dbReference type="Proteomes" id="UP000008216">
    <property type="component" value="Chromosome"/>
</dbReference>
<dbReference type="GO" id="GO:0005524">
    <property type="term" value="F:ATP binding"/>
    <property type="evidence" value="ECO:0007669"/>
    <property type="project" value="UniProtKB-UniRule"/>
</dbReference>
<dbReference type="GO" id="GO:0009384">
    <property type="term" value="F:N-acylmannosamine kinase activity"/>
    <property type="evidence" value="ECO:0007669"/>
    <property type="project" value="UniProtKB-UniRule"/>
</dbReference>
<dbReference type="GO" id="GO:0008270">
    <property type="term" value="F:zinc ion binding"/>
    <property type="evidence" value="ECO:0007669"/>
    <property type="project" value="UniProtKB-UniRule"/>
</dbReference>
<dbReference type="GO" id="GO:0019262">
    <property type="term" value="P:N-acetylneuraminate catabolic process"/>
    <property type="evidence" value="ECO:0007669"/>
    <property type="project" value="UniProtKB-UniRule"/>
</dbReference>
<dbReference type="CDD" id="cd24069">
    <property type="entry name" value="ASKHA_NBD_ROK_EcNanK-like"/>
    <property type="match status" value="1"/>
</dbReference>
<dbReference type="FunFam" id="3.30.420.40:FF:000062">
    <property type="entry name" value="N-acetylmannosamine kinase"/>
    <property type="match status" value="1"/>
</dbReference>
<dbReference type="FunFam" id="3.30.420.40:FF:000063">
    <property type="entry name" value="N-acetylmannosamine kinase"/>
    <property type="match status" value="1"/>
</dbReference>
<dbReference type="Gene3D" id="3.30.420.40">
    <property type="match status" value="2"/>
</dbReference>
<dbReference type="HAMAP" id="MF_01234">
    <property type="entry name" value="ManNAc_kinase"/>
    <property type="match status" value="1"/>
</dbReference>
<dbReference type="InterPro" id="IPR043129">
    <property type="entry name" value="ATPase_NBD"/>
</dbReference>
<dbReference type="InterPro" id="IPR023945">
    <property type="entry name" value="ManNAc_kinase_bac"/>
</dbReference>
<dbReference type="InterPro" id="IPR000600">
    <property type="entry name" value="ROK"/>
</dbReference>
<dbReference type="InterPro" id="IPR049874">
    <property type="entry name" value="ROK_cs"/>
</dbReference>
<dbReference type="NCBIfam" id="NF047821">
    <property type="entry name" value="NactlManKinNanK"/>
    <property type="match status" value="1"/>
</dbReference>
<dbReference type="NCBIfam" id="NF003461">
    <property type="entry name" value="PRK05082.1"/>
    <property type="match status" value="1"/>
</dbReference>
<dbReference type="PANTHER" id="PTHR18964:SF169">
    <property type="entry name" value="N-ACETYLMANNOSAMINE KINASE"/>
    <property type="match status" value="1"/>
</dbReference>
<dbReference type="PANTHER" id="PTHR18964">
    <property type="entry name" value="ROK (REPRESSOR, ORF, KINASE) FAMILY"/>
    <property type="match status" value="1"/>
</dbReference>
<dbReference type="Pfam" id="PF00480">
    <property type="entry name" value="ROK"/>
    <property type="match status" value="1"/>
</dbReference>
<dbReference type="SUPFAM" id="SSF53067">
    <property type="entry name" value="Actin-like ATPase domain"/>
    <property type="match status" value="1"/>
</dbReference>
<dbReference type="PROSITE" id="PS01125">
    <property type="entry name" value="ROK"/>
    <property type="match status" value="1"/>
</dbReference>
<proteinExistence type="inferred from homology"/>
<evidence type="ECO:0000255" key="1">
    <source>
        <dbReference type="HAMAP-Rule" id="MF_01234"/>
    </source>
</evidence>
<keyword id="KW-0067">ATP-binding</keyword>
<keyword id="KW-0119">Carbohydrate metabolism</keyword>
<keyword id="KW-0418">Kinase</keyword>
<keyword id="KW-0479">Metal-binding</keyword>
<keyword id="KW-0547">Nucleotide-binding</keyword>
<keyword id="KW-1185">Reference proteome</keyword>
<keyword id="KW-0808">Transferase</keyword>
<keyword id="KW-0862">Zinc</keyword>
<accession>A1AGB6</accession>
<reference key="1">
    <citation type="journal article" date="2007" name="J. Bacteriol.">
        <title>The genome sequence of avian pathogenic Escherichia coli strain O1:K1:H7 shares strong similarities with human extraintestinal pathogenic E. coli genomes.</title>
        <authorList>
            <person name="Johnson T.J."/>
            <person name="Kariyawasam S."/>
            <person name="Wannemuehler Y."/>
            <person name="Mangiamele P."/>
            <person name="Johnson S.J."/>
            <person name="Doetkott C."/>
            <person name="Skyberg J.A."/>
            <person name="Lynne A.M."/>
            <person name="Johnson J.R."/>
            <person name="Nolan L.K."/>
        </authorList>
    </citation>
    <scope>NUCLEOTIDE SEQUENCE [LARGE SCALE GENOMIC DNA]</scope>
</reference>
<name>NANK_ECOK1</name>
<sequence length="291" mass="29642">MTTLAIDIGGTKLAAALIGADGQIRDRRELPTPASQTPQALRDALSALVSPLQAHAQRVAIASTGIIRDGSLLALNPHNLGGLLHFPLVKTLEQLTNLPTIAINDAQAAAWAEYQALDGDITDMVFITVSTGVGGGVVSGGKLRTGPGGLAGHIGHTLADPHGPACGCGRTGCVEAIASGRGIATAAQGELAGANAKTIFTRAGQGDEQAQQLIHRSARTLARLIADIKATTDCQCVVVGGSVGLAEGYLALVETYLAQEPAAFHVDLLAAHYRHDAGLLGAALLAQGEIL</sequence>
<feature type="chain" id="PRO_0000301457" description="N-acetylmannosamine kinase">
    <location>
        <begin position="1"/>
        <end position="291"/>
    </location>
</feature>
<feature type="binding site" evidence="1">
    <location>
        <begin position="5"/>
        <end position="12"/>
    </location>
    <ligand>
        <name>ATP</name>
        <dbReference type="ChEBI" id="CHEBI:30616"/>
    </ligand>
</feature>
<feature type="binding site" evidence="1">
    <location>
        <begin position="132"/>
        <end position="139"/>
    </location>
    <ligand>
        <name>ATP</name>
        <dbReference type="ChEBI" id="CHEBI:30616"/>
    </ligand>
</feature>
<feature type="binding site" evidence="1">
    <location>
        <position position="156"/>
    </location>
    <ligand>
        <name>Zn(2+)</name>
        <dbReference type="ChEBI" id="CHEBI:29105"/>
    </ligand>
</feature>
<feature type="binding site" evidence="1">
    <location>
        <position position="166"/>
    </location>
    <ligand>
        <name>Zn(2+)</name>
        <dbReference type="ChEBI" id="CHEBI:29105"/>
    </ligand>
</feature>
<feature type="binding site" evidence="1">
    <location>
        <position position="168"/>
    </location>
    <ligand>
        <name>Zn(2+)</name>
        <dbReference type="ChEBI" id="CHEBI:29105"/>
    </ligand>
</feature>
<feature type="binding site" evidence="1">
    <location>
        <position position="173"/>
    </location>
    <ligand>
        <name>Zn(2+)</name>
        <dbReference type="ChEBI" id="CHEBI:29105"/>
    </ligand>
</feature>
<organism>
    <name type="scientific">Escherichia coli O1:K1 / APEC</name>
    <dbReference type="NCBI Taxonomy" id="405955"/>
    <lineage>
        <taxon>Bacteria</taxon>
        <taxon>Pseudomonadati</taxon>
        <taxon>Pseudomonadota</taxon>
        <taxon>Gammaproteobacteria</taxon>
        <taxon>Enterobacterales</taxon>
        <taxon>Enterobacteriaceae</taxon>
        <taxon>Escherichia</taxon>
    </lineage>
</organism>
<gene>
    <name evidence="1" type="primary">nanK</name>
    <name type="ordered locus">Ecok1_32120</name>
    <name type="ORF">APECO1_3221</name>
</gene>